<organism>
    <name type="scientific">Erwinia tasmaniensis (strain DSM 17950 / CFBP 7177 / CIP 109463 / NCPPB 4357 / Et1/99)</name>
    <dbReference type="NCBI Taxonomy" id="465817"/>
    <lineage>
        <taxon>Bacteria</taxon>
        <taxon>Pseudomonadati</taxon>
        <taxon>Pseudomonadota</taxon>
        <taxon>Gammaproteobacteria</taxon>
        <taxon>Enterobacterales</taxon>
        <taxon>Erwiniaceae</taxon>
        <taxon>Erwinia</taxon>
    </lineage>
</organism>
<reference key="1">
    <citation type="journal article" date="2008" name="Environ. Microbiol.">
        <title>The genome of Erwinia tasmaniensis strain Et1/99, a non-pathogenic bacterium in the genus Erwinia.</title>
        <authorList>
            <person name="Kube M."/>
            <person name="Migdoll A.M."/>
            <person name="Mueller I."/>
            <person name="Kuhl H."/>
            <person name="Beck A."/>
            <person name="Reinhardt R."/>
            <person name="Geider K."/>
        </authorList>
    </citation>
    <scope>NUCLEOTIDE SEQUENCE [LARGE SCALE GENOMIC DNA]</scope>
    <source>
        <strain>DSM 17950 / CFBP 7177 / CIP 109463 / NCPPB 4357 / Et1/99</strain>
    </source>
</reference>
<sequence>MARVKRGVVARARHKKILKQAKGYYGARSRVYRVAFQAVIKAGQYAYRDRRQRKRQFRQLWIARINAAARTNGISYSRFINGLKKASIEIDRKILADIAVFDKAVFAALVEKAKTALA</sequence>
<gene>
    <name evidence="1" type="primary">rplT</name>
    <name type="ordered locus">ETA_18380</name>
</gene>
<proteinExistence type="inferred from homology"/>
<protein>
    <recommendedName>
        <fullName evidence="1">Large ribosomal subunit protein bL20</fullName>
    </recommendedName>
    <alternativeName>
        <fullName evidence="2">50S ribosomal protein L20</fullName>
    </alternativeName>
</protein>
<evidence type="ECO:0000255" key="1">
    <source>
        <dbReference type="HAMAP-Rule" id="MF_00382"/>
    </source>
</evidence>
<evidence type="ECO:0000305" key="2"/>
<feature type="chain" id="PRO_1000122316" description="Large ribosomal subunit protein bL20">
    <location>
        <begin position="1"/>
        <end position="118"/>
    </location>
</feature>
<name>RL20_ERWT9</name>
<dbReference type="EMBL" id="CU468135">
    <property type="protein sequence ID" value="CAO96884.1"/>
    <property type="molecule type" value="Genomic_DNA"/>
</dbReference>
<dbReference type="RefSeq" id="WP_012441569.1">
    <property type="nucleotide sequence ID" value="NC_010694.1"/>
</dbReference>
<dbReference type="SMR" id="B2VEL7"/>
<dbReference type="STRING" id="465817.ETA_18380"/>
<dbReference type="KEGG" id="eta:ETA_18380"/>
<dbReference type="eggNOG" id="COG0292">
    <property type="taxonomic scope" value="Bacteria"/>
</dbReference>
<dbReference type="HOGENOM" id="CLU_123265_0_1_6"/>
<dbReference type="OrthoDB" id="9808966at2"/>
<dbReference type="Proteomes" id="UP000001726">
    <property type="component" value="Chromosome"/>
</dbReference>
<dbReference type="GO" id="GO:1990904">
    <property type="term" value="C:ribonucleoprotein complex"/>
    <property type="evidence" value="ECO:0007669"/>
    <property type="project" value="UniProtKB-KW"/>
</dbReference>
<dbReference type="GO" id="GO:0005840">
    <property type="term" value="C:ribosome"/>
    <property type="evidence" value="ECO:0007669"/>
    <property type="project" value="UniProtKB-KW"/>
</dbReference>
<dbReference type="GO" id="GO:0019843">
    <property type="term" value="F:rRNA binding"/>
    <property type="evidence" value="ECO:0007669"/>
    <property type="project" value="UniProtKB-UniRule"/>
</dbReference>
<dbReference type="GO" id="GO:0003735">
    <property type="term" value="F:structural constituent of ribosome"/>
    <property type="evidence" value="ECO:0007669"/>
    <property type="project" value="InterPro"/>
</dbReference>
<dbReference type="GO" id="GO:0000027">
    <property type="term" value="P:ribosomal large subunit assembly"/>
    <property type="evidence" value="ECO:0007669"/>
    <property type="project" value="UniProtKB-UniRule"/>
</dbReference>
<dbReference type="GO" id="GO:0006412">
    <property type="term" value="P:translation"/>
    <property type="evidence" value="ECO:0007669"/>
    <property type="project" value="InterPro"/>
</dbReference>
<dbReference type="CDD" id="cd07026">
    <property type="entry name" value="Ribosomal_L20"/>
    <property type="match status" value="1"/>
</dbReference>
<dbReference type="FunFam" id="1.10.1900.20:FF:000001">
    <property type="entry name" value="50S ribosomal protein L20"/>
    <property type="match status" value="1"/>
</dbReference>
<dbReference type="Gene3D" id="6.10.160.10">
    <property type="match status" value="1"/>
</dbReference>
<dbReference type="Gene3D" id="1.10.1900.20">
    <property type="entry name" value="Ribosomal protein L20"/>
    <property type="match status" value="1"/>
</dbReference>
<dbReference type="HAMAP" id="MF_00382">
    <property type="entry name" value="Ribosomal_bL20"/>
    <property type="match status" value="1"/>
</dbReference>
<dbReference type="InterPro" id="IPR005813">
    <property type="entry name" value="Ribosomal_bL20"/>
</dbReference>
<dbReference type="InterPro" id="IPR049946">
    <property type="entry name" value="RIBOSOMAL_L20_CS"/>
</dbReference>
<dbReference type="InterPro" id="IPR035566">
    <property type="entry name" value="Ribosomal_protein_bL20_C"/>
</dbReference>
<dbReference type="NCBIfam" id="TIGR01032">
    <property type="entry name" value="rplT_bact"/>
    <property type="match status" value="1"/>
</dbReference>
<dbReference type="PANTHER" id="PTHR10986">
    <property type="entry name" value="39S RIBOSOMAL PROTEIN L20"/>
    <property type="match status" value="1"/>
</dbReference>
<dbReference type="Pfam" id="PF00453">
    <property type="entry name" value="Ribosomal_L20"/>
    <property type="match status" value="1"/>
</dbReference>
<dbReference type="PRINTS" id="PR00062">
    <property type="entry name" value="RIBOSOMALL20"/>
</dbReference>
<dbReference type="SUPFAM" id="SSF74731">
    <property type="entry name" value="Ribosomal protein L20"/>
    <property type="match status" value="1"/>
</dbReference>
<dbReference type="PROSITE" id="PS00937">
    <property type="entry name" value="RIBOSOMAL_L20"/>
    <property type="match status" value="1"/>
</dbReference>
<comment type="function">
    <text evidence="1">Binds directly to 23S ribosomal RNA and is necessary for the in vitro assembly process of the 50S ribosomal subunit. It is not involved in the protein synthesizing functions of that subunit.</text>
</comment>
<comment type="similarity">
    <text evidence="1">Belongs to the bacterial ribosomal protein bL20 family.</text>
</comment>
<keyword id="KW-1185">Reference proteome</keyword>
<keyword id="KW-0687">Ribonucleoprotein</keyword>
<keyword id="KW-0689">Ribosomal protein</keyword>
<keyword id="KW-0694">RNA-binding</keyword>
<keyword id="KW-0699">rRNA-binding</keyword>
<accession>B2VEL7</accession>